<feature type="chain" id="PRO_1000194087" description="Large ribosomal subunit protein bL35">
    <location>
        <begin position="1"/>
        <end position="66"/>
    </location>
</feature>
<evidence type="ECO:0000255" key="1">
    <source>
        <dbReference type="HAMAP-Rule" id="MF_00514"/>
    </source>
</evidence>
<evidence type="ECO:0000305" key="2"/>
<dbReference type="EMBL" id="CP001275">
    <property type="protein sequence ID" value="ACM06378.1"/>
    <property type="molecule type" value="Genomic_DNA"/>
</dbReference>
<dbReference type="SMR" id="B9KZB4"/>
<dbReference type="STRING" id="309801.trd_0828"/>
<dbReference type="KEGG" id="tro:trd_0828"/>
<dbReference type="eggNOG" id="COG0291">
    <property type="taxonomic scope" value="Bacteria"/>
</dbReference>
<dbReference type="HOGENOM" id="CLU_169643_4_1_0"/>
<dbReference type="OrthoDB" id="47476at2"/>
<dbReference type="Proteomes" id="UP000000447">
    <property type="component" value="Chromosome"/>
</dbReference>
<dbReference type="GO" id="GO:0022625">
    <property type="term" value="C:cytosolic large ribosomal subunit"/>
    <property type="evidence" value="ECO:0007669"/>
    <property type="project" value="TreeGrafter"/>
</dbReference>
<dbReference type="GO" id="GO:0003735">
    <property type="term" value="F:structural constituent of ribosome"/>
    <property type="evidence" value="ECO:0007669"/>
    <property type="project" value="InterPro"/>
</dbReference>
<dbReference type="GO" id="GO:0006412">
    <property type="term" value="P:translation"/>
    <property type="evidence" value="ECO:0007669"/>
    <property type="project" value="UniProtKB-UniRule"/>
</dbReference>
<dbReference type="FunFam" id="4.10.410.60:FF:000001">
    <property type="entry name" value="50S ribosomal protein L35"/>
    <property type="match status" value="1"/>
</dbReference>
<dbReference type="Gene3D" id="4.10.410.60">
    <property type="match status" value="1"/>
</dbReference>
<dbReference type="HAMAP" id="MF_00514">
    <property type="entry name" value="Ribosomal_bL35"/>
    <property type="match status" value="1"/>
</dbReference>
<dbReference type="InterPro" id="IPR001706">
    <property type="entry name" value="Ribosomal_bL35"/>
</dbReference>
<dbReference type="InterPro" id="IPR021137">
    <property type="entry name" value="Ribosomal_bL35-like"/>
</dbReference>
<dbReference type="InterPro" id="IPR018265">
    <property type="entry name" value="Ribosomal_bL35_CS"/>
</dbReference>
<dbReference type="InterPro" id="IPR037229">
    <property type="entry name" value="Ribosomal_bL35_sf"/>
</dbReference>
<dbReference type="NCBIfam" id="TIGR00001">
    <property type="entry name" value="rpmI_bact"/>
    <property type="match status" value="1"/>
</dbReference>
<dbReference type="PANTHER" id="PTHR33343">
    <property type="entry name" value="54S RIBOSOMAL PROTEIN BL35M"/>
    <property type="match status" value="1"/>
</dbReference>
<dbReference type="PANTHER" id="PTHR33343:SF1">
    <property type="entry name" value="LARGE RIBOSOMAL SUBUNIT PROTEIN BL35M"/>
    <property type="match status" value="1"/>
</dbReference>
<dbReference type="Pfam" id="PF01632">
    <property type="entry name" value="Ribosomal_L35p"/>
    <property type="match status" value="1"/>
</dbReference>
<dbReference type="PRINTS" id="PR00064">
    <property type="entry name" value="RIBOSOMALL35"/>
</dbReference>
<dbReference type="SUPFAM" id="SSF143034">
    <property type="entry name" value="L35p-like"/>
    <property type="match status" value="1"/>
</dbReference>
<dbReference type="PROSITE" id="PS00936">
    <property type="entry name" value="RIBOSOMAL_L35"/>
    <property type="match status" value="1"/>
</dbReference>
<reference key="1">
    <citation type="journal article" date="2009" name="PLoS ONE">
        <title>Complete genome sequence of the aerobic CO-oxidizing thermophile Thermomicrobium roseum.</title>
        <authorList>
            <person name="Wu D."/>
            <person name="Raymond J."/>
            <person name="Wu M."/>
            <person name="Chatterji S."/>
            <person name="Ren Q."/>
            <person name="Graham J.E."/>
            <person name="Bryant D.A."/>
            <person name="Robb F."/>
            <person name="Colman A."/>
            <person name="Tallon L.J."/>
            <person name="Badger J.H."/>
            <person name="Madupu R."/>
            <person name="Ward N.L."/>
            <person name="Eisen J.A."/>
        </authorList>
    </citation>
    <scope>NUCLEOTIDE SEQUENCE [LARGE SCALE GENOMIC DNA]</scope>
    <source>
        <strain>ATCC 27502 / DSM 5159 / P-2</strain>
    </source>
</reference>
<accession>B9KZB4</accession>
<gene>
    <name evidence="1" type="primary">rpmI</name>
    <name type="ordered locus">trd_0828</name>
</gene>
<sequence>MPKMKTKRAAAKRFKITGTGKVMRMRHARNHNRLKKAPRVRRSFDKMAPVHPSDVHRVKPLLPYAW</sequence>
<protein>
    <recommendedName>
        <fullName evidence="1">Large ribosomal subunit protein bL35</fullName>
    </recommendedName>
    <alternativeName>
        <fullName evidence="2">50S ribosomal protein L35</fullName>
    </alternativeName>
</protein>
<proteinExistence type="inferred from homology"/>
<keyword id="KW-1185">Reference proteome</keyword>
<keyword id="KW-0687">Ribonucleoprotein</keyword>
<keyword id="KW-0689">Ribosomal protein</keyword>
<organism>
    <name type="scientific">Thermomicrobium roseum (strain ATCC 27502 / DSM 5159 / P-2)</name>
    <dbReference type="NCBI Taxonomy" id="309801"/>
    <lineage>
        <taxon>Bacteria</taxon>
        <taxon>Pseudomonadati</taxon>
        <taxon>Thermomicrobiota</taxon>
        <taxon>Thermomicrobia</taxon>
        <taxon>Thermomicrobiales</taxon>
        <taxon>Thermomicrobiaceae</taxon>
        <taxon>Thermomicrobium</taxon>
    </lineage>
</organism>
<name>RL35_THERP</name>
<comment type="similarity">
    <text evidence="1">Belongs to the bacterial ribosomal protein bL35 family.</text>
</comment>